<sequence length="159" mass="17549">MTNGNGTPPEGAPSPQLNVLAQYTKDLSFENPNAPSSLAPQQKPPSISVQINVNANNVAQDEFEVTLTVEGKAEHNDKLMFRFELAYAGLFRIVNVPQENLPPLVMIECPRLLFPFAREIIATAVRDGGFPPLMLDPVDFVGMFRQNMERQAAVQQKPS</sequence>
<accession>Q1QRY0</accession>
<reference key="1">
    <citation type="submission" date="2006-03" db="EMBL/GenBank/DDBJ databases">
        <title>Complete sequence of chromosome of Nitrobacter hamburgensis X14.</title>
        <authorList>
            <consortium name="US DOE Joint Genome Institute"/>
            <person name="Copeland A."/>
            <person name="Lucas S."/>
            <person name="Lapidus A."/>
            <person name="Barry K."/>
            <person name="Detter J.C."/>
            <person name="Glavina del Rio T."/>
            <person name="Hammon N."/>
            <person name="Israni S."/>
            <person name="Dalin E."/>
            <person name="Tice H."/>
            <person name="Pitluck S."/>
            <person name="Chain P."/>
            <person name="Malfatti S."/>
            <person name="Shin M."/>
            <person name="Vergez L."/>
            <person name="Schmutz J."/>
            <person name="Larimer F."/>
            <person name="Land M."/>
            <person name="Hauser L."/>
            <person name="Kyrpides N."/>
            <person name="Ivanova N."/>
            <person name="Ward B."/>
            <person name="Arp D."/>
            <person name="Klotz M."/>
            <person name="Stein L."/>
            <person name="O'Mullan G."/>
            <person name="Starkenburg S."/>
            <person name="Sayavedra L."/>
            <person name="Poret-Peterson A.T."/>
            <person name="Gentry M.E."/>
            <person name="Bruce D."/>
            <person name="Richardson P."/>
        </authorList>
    </citation>
    <scope>NUCLEOTIDE SEQUENCE [LARGE SCALE GENOMIC DNA]</scope>
    <source>
        <strain>DSM 10229 / NCIMB 13809 / X14</strain>
    </source>
</reference>
<organism>
    <name type="scientific">Nitrobacter hamburgensis (strain DSM 10229 / NCIMB 13809 / X14)</name>
    <dbReference type="NCBI Taxonomy" id="323097"/>
    <lineage>
        <taxon>Bacteria</taxon>
        <taxon>Pseudomonadati</taxon>
        <taxon>Pseudomonadota</taxon>
        <taxon>Alphaproteobacteria</taxon>
        <taxon>Hyphomicrobiales</taxon>
        <taxon>Nitrobacteraceae</taxon>
        <taxon>Nitrobacter</taxon>
    </lineage>
</organism>
<feature type="chain" id="PRO_1000062487" description="Protein-export protein SecB">
    <location>
        <begin position="1"/>
        <end position="159"/>
    </location>
</feature>
<keyword id="KW-0143">Chaperone</keyword>
<keyword id="KW-0963">Cytoplasm</keyword>
<keyword id="KW-0653">Protein transport</keyword>
<keyword id="KW-1185">Reference proteome</keyword>
<keyword id="KW-0811">Translocation</keyword>
<keyword id="KW-0813">Transport</keyword>
<comment type="function">
    <text evidence="1">One of the proteins required for the normal export of preproteins out of the cell cytoplasm. It is a molecular chaperone that binds to a subset of precursor proteins, maintaining them in a translocation-competent state. It also specifically binds to its receptor SecA.</text>
</comment>
<comment type="subunit">
    <text evidence="1">Homotetramer, a dimer of dimers. One homotetramer interacts with 1 SecA dimer.</text>
</comment>
<comment type="subcellular location">
    <subcellularLocation>
        <location evidence="1">Cytoplasm</location>
    </subcellularLocation>
</comment>
<comment type="similarity">
    <text evidence="1">Belongs to the SecB family.</text>
</comment>
<protein>
    <recommendedName>
        <fullName evidence="1">Protein-export protein SecB</fullName>
    </recommendedName>
</protein>
<gene>
    <name evidence="1" type="primary">secB</name>
    <name type="ordered locus">Nham_0116</name>
</gene>
<proteinExistence type="inferred from homology"/>
<name>SECB_NITHX</name>
<dbReference type="EMBL" id="CP000319">
    <property type="protein sequence ID" value="ABE61017.1"/>
    <property type="molecule type" value="Genomic_DNA"/>
</dbReference>
<dbReference type="RefSeq" id="WP_011508724.1">
    <property type="nucleotide sequence ID" value="NC_007964.1"/>
</dbReference>
<dbReference type="SMR" id="Q1QRY0"/>
<dbReference type="STRING" id="323097.Nham_0116"/>
<dbReference type="KEGG" id="nha:Nham_0116"/>
<dbReference type="eggNOG" id="COG1952">
    <property type="taxonomic scope" value="Bacteria"/>
</dbReference>
<dbReference type="HOGENOM" id="CLU_111574_0_0_5"/>
<dbReference type="OrthoDB" id="9795145at2"/>
<dbReference type="Proteomes" id="UP000001953">
    <property type="component" value="Chromosome"/>
</dbReference>
<dbReference type="GO" id="GO:0005737">
    <property type="term" value="C:cytoplasm"/>
    <property type="evidence" value="ECO:0007669"/>
    <property type="project" value="UniProtKB-SubCell"/>
</dbReference>
<dbReference type="GO" id="GO:0051082">
    <property type="term" value="F:unfolded protein binding"/>
    <property type="evidence" value="ECO:0007669"/>
    <property type="project" value="InterPro"/>
</dbReference>
<dbReference type="GO" id="GO:0006457">
    <property type="term" value="P:protein folding"/>
    <property type="evidence" value="ECO:0007669"/>
    <property type="project" value="UniProtKB-UniRule"/>
</dbReference>
<dbReference type="GO" id="GO:0051262">
    <property type="term" value="P:protein tetramerization"/>
    <property type="evidence" value="ECO:0007669"/>
    <property type="project" value="InterPro"/>
</dbReference>
<dbReference type="GO" id="GO:0015031">
    <property type="term" value="P:protein transport"/>
    <property type="evidence" value="ECO:0007669"/>
    <property type="project" value="UniProtKB-UniRule"/>
</dbReference>
<dbReference type="Gene3D" id="3.10.420.10">
    <property type="entry name" value="SecB-like"/>
    <property type="match status" value="1"/>
</dbReference>
<dbReference type="HAMAP" id="MF_00821">
    <property type="entry name" value="SecB"/>
    <property type="match status" value="1"/>
</dbReference>
<dbReference type="InterPro" id="IPR003708">
    <property type="entry name" value="SecB"/>
</dbReference>
<dbReference type="InterPro" id="IPR035958">
    <property type="entry name" value="SecB-like_sf"/>
</dbReference>
<dbReference type="NCBIfam" id="NF004392">
    <property type="entry name" value="PRK05751.1-3"/>
    <property type="match status" value="1"/>
</dbReference>
<dbReference type="NCBIfam" id="TIGR00809">
    <property type="entry name" value="secB"/>
    <property type="match status" value="1"/>
</dbReference>
<dbReference type="PANTHER" id="PTHR36918">
    <property type="match status" value="1"/>
</dbReference>
<dbReference type="PANTHER" id="PTHR36918:SF1">
    <property type="entry name" value="PROTEIN-EXPORT PROTEIN SECB"/>
    <property type="match status" value="1"/>
</dbReference>
<dbReference type="Pfam" id="PF02556">
    <property type="entry name" value="SecB"/>
    <property type="match status" value="1"/>
</dbReference>
<dbReference type="PRINTS" id="PR01594">
    <property type="entry name" value="SECBCHAPRONE"/>
</dbReference>
<dbReference type="SUPFAM" id="SSF54611">
    <property type="entry name" value="SecB-like"/>
    <property type="match status" value="1"/>
</dbReference>
<evidence type="ECO:0000255" key="1">
    <source>
        <dbReference type="HAMAP-Rule" id="MF_00821"/>
    </source>
</evidence>